<name>CML42_ARATH</name>
<accession>Q9SVG9</accession>
<reference key="1">
    <citation type="journal article" date="1999" name="Nature">
        <title>Sequence and analysis of chromosome 4 of the plant Arabidopsis thaliana.</title>
        <authorList>
            <person name="Mayer K.F.X."/>
            <person name="Schueller C."/>
            <person name="Wambutt R."/>
            <person name="Murphy G."/>
            <person name="Volckaert G."/>
            <person name="Pohl T."/>
            <person name="Duesterhoeft A."/>
            <person name="Stiekema W."/>
            <person name="Entian K.-D."/>
            <person name="Terryn N."/>
            <person name="Harris B."/>
            <person name="Ansorge W."/>
            <person name="Brandt P."/>
            <person name="Grivell L.A."/>
            <person name="Rieger M."/>
            <person name="Weichselgartner M."/>
            <person name="de Simone V."/>
            <person name="Obermaier B."/>
            <person name="Mache R."/>
            <person name="Mueller M."/>
            <person name="Kreis M."/>
            <person name="Delseny M."/>
            <person name="Puigdomenech P."/>
            <person name="Watson M."/>
            <person name="Schmidtheini T."/>
            <person name="Reichert B."/>
            <person name="Portetelle D."/>
            <person name="Perez-Alonso M."/>
            <person name="Boutry M."/>
            <person name="Bancroft I."/>
            <person name="Vos P."/>
            <person name="Hoheisel J."/>
            <person name="Zimmermann W."/>
            <person name="Wedler H."/>
            <person name="Ridley P."/>
            <person name="Langham S.-A."/>
            <person name="McCullagh B."/>
            <person name="Bilham L."/>
            <person name="Robben J."/>
            <person name="van der Schueren J."/>
            <person name="Grymonprez B."/>
            <person name="Chuang Y.-J."/>
            <person name="Vandenbussche F."/>
            <person name="Braeken M."/>
            <person name="Weltjens I."/>
            <person name="Voet M."/>
            <person name="Bastiaens I."/>
            <person name="Aert R."/>
            <person name="Defoor E."/>
            <person name="Weitzenegger T."/>
            <person name="Bothe G."/>
            <person name="Ramsperger U."/>
            <person name="Hilbert H."/>
            <person name="Braun M."/>
            <person name="Holzer E."/>
            <person name="Brandt A."/>
            <person name="Peters S."/>
            <person name="van Staveren M."/>
            <person name="Dirkse W."/>
            <person name="Mooijman P."/>
            <person name="Klein Lankhorst R."/>
            <person name="Rose M."/>
            <person name="Hauf J."/>
            <person name="Koetter P."/>
            <person name="Berneiser S."/>
            <person name="Hempel S."/>
            <person name="Feldpausch M."/>
            <person name="Lamberth S."/>
            <person name="Van den Daele H."/>
            <person name="De Keyser A."/>
            <person name="Buysshaert C."/>
            <person name="Gielen J."/>
            <person name="Villarroel R."/>
            <person name="De Clercq R."/>
            <person name="van Montagu M."/>
            <person name="Rogers J."/>
            <person name="Cronin A."/>
            <person name="Quail M.A."/>
            <person name="Bray-Allen S."/>
            <person name="Clark L."/>
            <person name="Doggett J."/>
            <person name="Hall S."/>
            <person name="Kay M."/>
            <person name="Lennard N."/>
            <person name="McLay K."/>
            <person name="Mayes R."/>
            <person name="Pettett A."/>
            <person name="Rajandream M.A."/>
            <person name="Lyne M."/>
            <person name="Benes V."/>
            <person name="Rechmann S."/>
            <person name="Borkova D."/>
            <person name="Bloecker H."/>
            <person name="Scharfe M."/>
            <person name="Grimm M."/>
            <person name="Loehnert T.-H."/>
            <person name="Dose S."/>
            <person name="de Haan M."/>
            <person name="Maarse A.C."/>
            <person name="Schaefer M."/>
            <person name="Mueller-Auer S."/>
            <person name="Gabel C."/>
            <person name="Fuchs M."/>
            <person name="Fartmann B."/>
            <person name="Granderath K."/>
            <person name="Dauner D."/>
            <person name="Herzl A."/>
            <person name="Neumann S."/>
            <person name="Argiriou A."/>
            <person name="Vitale D."/>
            <person name="Liguori R."/>
            <person name="Piravandi E."/>
            <person name="Massenet O."/>
            <person name="Quigley F."/>
            <person name="Clabauld G."/>
            <person name="Muendlein A."/>
            <person name="Felber R."/>
            <person name="Schnabl S."/>
            <person name="Hiller R."/>
            <person name="Schmidt W."/>
            <person name="Lecharny A."/>
            <person name="Aubourg S."/>
            <person name="Chefdor F."/>
            <person name="Cooke R."/>
            <person name="Berger C."/>
            <person name="Monfort A."/>
            <person name="Casacuberta E."/>
            <person name="Gibbons T."/>
            <person name="Weber N."/>
            <person name="Vandenbol M."/>
            <person name="Bargues M."/>
            <person name="Terol J."/>
            <person name="Torres A."/>
            <person name="Perez-Perez A."/>
            <person name="Purnelle B."/>
            <person name="Bent E."/>
            <person name="Johnson S."/>
            <person name="Tacon D."/>
            <person name="Jesse T."/>
            <person name="Heijnen L."/>
            <person name="Schwarz S."/>
            <person name="Scholler P."/>
            <person name="Heber S."/>
            <person name="Francs P."/>
            <person name="Bielke C."/>
            <person name="Frishman D."/>
            <person name="Haase D."/>
            <person name="Lemcke K."/>
            <person name="Mewes H.-W."/>
            <person name="Stocker S."/>
            <person name="Zaccaria P."/>
            <person name="Bevan M."/>
            <person name="Wilson R.K."/>
            <person name="de la Bastide M."/>
            <person name="Habermann K."/>
            <person name="Parnell L."/>
            <person name="Dedhia N."/>
            <person name="Gnoj L."/>
            <person name="Schutz K."/>
            <person name="Huang E."/>
            <person name="Spiegel L."/>
            <person name="Sekhon M."/>
            <person name="Murray J."/>
            <person name="Sheet P."/>
            <person name="Cordes M."/>
            <person name="Abu-Threideh J."/>
            <person name="Stoneking T."/>
            <person name="Kalicki J."/>
            <person name="Graves T."/>
            <person name="Harmon G."/>
            <person name="Edwards J."/>
            <person name="Latreille P."/>
            <person name="Courtney L."/>
            <person name="Cloud J."/>
            <person name="Abbott A."/>
            <person name="Scott K."/>
            <person name="Johnson D."/>
            <person name="Minx P."/>
            <person name="Bentley D."/>
            <person name="Fulton B."/>
            <person name="Miller N."/>
            <person name="Greco T."/>
            <person name="Kemp K."/>
            <person name="Kramer J."/>
            <person name="Fulton L."/>
            <person name="Mardis E."/>
            <person name="Dante M."/>
            <person name="Pepin K."/>
            <person name="Hillier L.W."/>
            <person name="Nelson J."/>
            <person name="Spieth J."/>
            <person name="Ryan E."/>
            <person name="Andrews S."/>
            <person name="Geisel C."/>
            <person name="Layman D."/>
            <person name="Du H."/>
            <person name="Ali J."/>
            <person name="Berghoff A."/>
            <person name="Jones K."/>
            <person name="Drone K."/>
            <person name="Cotton M."/>
            <person name="Joshu C."/>
            <person name="Antonoiu B."/>
            <person name="Zidanic M."/>
            <person name="Strong C."/>
            <person name="Sun H."/>
            <person name="Lamar B."/>
            <person name="Yordan C."/>
            <person name="Ma P."/>
            <person name="Zhong J."/>
            <person name="Preston R."/>
            <person name="Vil D."/>
            <person name="Shekher M."/>
            <person name="Matero A."/>
            <person name="Shah R."/>
            <person name="Swaby I.K."/>
            <person name="O'Shaughnessy A."/>
            <person name="Rodriguez M."/>
            <person name="Hoffman J."/>
            <person name="Till S."/>
            <person name="Granat S."/>
            <person name="Shohdy N."/>
            <person name="Hasegawa A."/>
            <person name="Hameed A."/>
            <person name="Lodhi M."/>
            <person name="Johnson A."/>
            <person name="Chen E."/>
            <person name="Marra M.A."/>
            <person name="Martienssen R."/>
            <person name="McCombie W.R."/>
        </authorList>
    </citation>
    <scope>NUCLEOTIDE SEQUENCE [LARGE SCALE GENOMIC DNA]</scope>
    <source>
        <strain>cv. Columbia</strain>
    </source>
</reference>
<reference key="2">
    <citation type="journal article" date="2017" name="Plant J.">
        <title>Araport11: a complete reannotation of the Arabidopsis thaliana reference genome.</title>
        <authorList>
            <person name="Cheng C.Y."/>
            <person name="Krishnakumar V."/>
            <person name="Chan A.P."/>
            <person name="Thibaud-Nissen F."/>
            <person name="Schobel S."/>
            <person name="Town C.D."/>
        </authorList>
    </citation>
    <scope>GENOME REANNOTATION</scope>
    <source>
        <strain>cv. Columbia</strain>
    </source>
</reference>
<reference key="3">
    <citation type="journal article" date="2002" name="Science">
        <title>Functional annotation of a full-length Arabidopsis cDNA collection.</title>
        <authorList>
            <person name="Seki M."/>
            <person name="Narusaka M."/>
            <person name="Kamiya A."/>
            <person name="Ishida J."/>
            <person name="Satou M."/>
            <person name="Sakurai T."/>
            <person name="Nakajima M."/>
            <person name="Enju A."/>
            <person name="Akiyama K."/>
            <person name="Oono Y."/>
            <person name="Muramatsu M."/>
            <person name="Hayashizaki Y."/>
            <person name="Kawai J."/>
            <person name="Carninci P."/>
            <person name="Itoh M."/>
            <person name="Ishii Y."/>
            <person name="Arakawa T."/>
            <person name="Shibata K."/>
            <person name="Shinagawa A."/>
            <person name="Shinozaki K."/>
        </authorList>
    </citation>
    <scope>NUCLEOTIDE SEQUENCE [LARGE SCALE MRNA]</scope>
    <source>
        <strain>cv. Columbia</strain>
    </source>
</reference>
<reference key="4">
    <citation type="journal article" date="2003" name="Science">
        <title>Empirical analysis of transcriptional activity in the Arabidopsis genome.</title>
        <authorList>
            <person name="Yamada K."/>
            <person name="Lim J."/>
            <person name="Dale J.M."/>
            <person name="Chen H."/>
            <person name="Shinn P."/>
            <person name="Palm C.J."/>
            <person name="Southwick A.M."/>
            <person name="Wu H.C."/>
            <person name="Kim C.J."/>
            <person name="Nguyen M."/>
            <person name="Pham P.K."/>
            <person name="Cheuk R.F."/>
            <person name="Karlin-Newmann G."/>
            <person name="Liu S.X."/>
            <person name="Lam B."/>
            <person name="Sakano H."/>
            <person name="Wu T."/>
            <person name="Yu G."/>
            <person name="Miranda M."/>
            <person name="Quach H.L."/>
            <person name="Tripp M."/>
            <person name="Chang C.H."/>
            <person name="Lee J.M."/>
            <person name="Toriumi M.J."/>
            <person name="Chan M.M."/>
            <person name="Tang C.C."/>
            <person name="Onodera C.S."/>
            <person name="Deng J.M."/>
            <person name="Akiyama K."/>
            <person name="Ansari Y."/>
            <person name="Arakawa T."/>
            <person name="Banh J."/>
            <person name="Banno F."/>
            <person name="Bowser L."/>
            <person name="Brooks S.Y."/>
            <person name="Carninci P."/>
            <person name="Chao Q."/>
            <person name="Choy N."/>
            <person name="Enju A."/>
            <person name="Goldsmith A.D."/>
            <person name="Gurjal M."/>
            <person name="Hansen N.F."/>
            <person name="Hayashizaki Y."/>
            <person name="Johnson-Hopson C."/>
            <person name="Hsuan V.W."/>
            <person name="Iida K."/>
            <person name="Karnes M."/>
            <person name="Khan S."/>
            <person name="Koesema E."/>
            <person name="Ishida J."/>
            <person name="Jiang P.X."/>
            <person name="Jones T."/>
            <person name="Kawai J."/>
            <person name="Kamiya A."/>
            <person name="Meyers C."/>
            <person name="Nakajima M."/>
            <person name="Narusaka M."/>
            <person name="Seki M."/>
            <person name="Sakurai T."/>
            <person name="Satou M."/>
            <person name="Tamse R."/>
            <person name="Vaysberg M."/>
            <person name="Wallender E.K."/>
            <person name="Wong C."/>
            <person name="Yamamura Y."/>
            <person name="Yuan S."/>
            <person name="Shinozaki K."/>
            <person name="Davis R.W."/>
            <person name="Theologis A."/>
            <person name="Ecker J.R."/>
        </authorList>
    </citation>
    <scope>NUCLEOTIDE SEQUENCE [LARGE SCALE MRNA]</scope>
    <source>
        <strain>cv. Columbia</strain>
    </source>
</reference>
<reference key="5">
    <citation type="journal article" date="2003" name="New Phytol.">
        <title>Calmodulins and related potential calcium sensors of Arabidopsis.</title>
        <authorList>
            <person name="McCormack E."/>
            <person name="Braam J."/>
        </authorList>
    </citation>
    <scope>GENE FAMILY</scope>
    <scope>NOMENCLATURE</scope>
</reference>
<reference key="6">
    <citation type="journal article" date="2005" name="New Phytol.">
        <title>Genome-wide identification of touch- and darkness-regulated Arabidopsis genes: a focus on calmodulin-like and XTH genes.</title>
        <authorList>
            <person name="Lee D."/>
            <person name="Polisensky D.H."/>
            <person name="Braam J."/>
        </authorList>
    </citation>
    <scope>INDUCTION</scope>
</reference>
<reference key="7">
    <citation type="journal article" date="2005" name="Plant Mol. Biol.">
        <title>Calmodulin-like proteins from Arabidopsis and tomato are involved in host defense against Pseudomonas syringae pv. tomato.</title>
        <authorList>
            <person name="Chiasson D."/>
            <person name="Ekengren S.K."/>
            <person name="Martin G.B."/>
            <person name="Dobney S.L."/>
            <person name="Snedden W.A."/>
        </authorList>
    </citation>
    <scope>FUNCTION</scope>
    <scope>TISSUE SPECIFICITY</scope>
</reference>
<reference key="8">
    <citation type="journal article" date="2009" name="J. Biol. Chem.">
        <title>The calmodulin-related calcium sensor CML42 plays a role in trichome branching.</title>
        <authorList>
            <person name="Dobney S."/>
            <person name="Chiasson D."/>
            <person name="Lam P."/>
            <person name="Smith S.P."/>
            <person name="Snedden W.A."/>
        </authorList>
    </citation>
    <scope>FUNCTION</scope>
    <scope>TISSUE SPECIFICITY</scope>
    <scope>INTERACTION WITH KIC</scope>
    <scope>DISRUPTION PHENOTYPE</scope>
</reference>
<gene>
    <name type="primary">CML42</name>
    <name type="ordered locus">At4g20780</name>
    <name type="ORF">F21C20.130</name>
</gene>
<organism>
    <name type="scientific">Arabidopsis thaliana</name>
    <name type="common">Mouse-ear cress</name>
    <dbReference type="NCBI Taxonomy" id="3702"/>
    <lineage>
        <taxon>Eukaryota</taxon>
        <taxon>Viridiplantae</taxon>
        <taxon>Streptophyta</taxon>
        <taxon>Embryophyta</taxon>
        <taxon>Tracheophyta</taxon>
        <taxon>Spermatophyta</taxon>
        <taxon>Magnoliopsida</taxon>
        <taxon>eudicotyledons</taxon>
        <taxon>Gunneridae</taxon>
        <taxon>Pentapetalae</taxon>
        <taxon>rosids</taxon>
        <taxon>malvids</taxon>
        <taxon>Brassicales</taxon>
        <taxon>Brassicaceae</taxon>
        <taxon>Camelineae</taxon>
        <taxon>Arabidopsis</taxon>
    </lineage>
</organism>
<dbReference type="EMBL" id="AL080254">
    <property type="protein sequence ID" value="CAB45844.1"/>
    <property type="molecule type" value="Genomic_DNA"/>
</dbReference>
<dbReference type="EMBL" id="AL161553">
    <property type="protein sequence ID" value="CAB79078.1"/>
    <property type="molecule type" value="Genomic_DNA"/>
</dbReference>
<dbReference type="EMBL" id="CP002687">
    <property type="protein sequence ID" value="AEE84360.1"/>
    <property type="molecule type" value="Genomic_DNA"/>
</dbReference>
<dbReference type="EMBL" id="AK117845">
    <property type="protein sequence ID" value="BAC42486.1"/>
    <property type="molecule type" value="mRNA"/>
</dbReference>
<dbReference type="EMBL" id="BT003724">
    <property type="protein sequence ID" value="AAO39952.1"/>
    <property type="molecule type" value="mRNA"/>
</dbReference>
<dbReference type="PIR" id="T10620">
    <property type="entry name" value="T10620"/>
</dbReference>
<dbReference type="RefSeq" id="NP_193810.1">
    <property type="nucleotide sequence ID" value="NM_118196.4"/>
</dbReference>
<dbReference type="SMR" id="Q9SVG9"/>
<dbReference type="BioGRID" id="13117">
    <property type="interactions" value="1"/>
</dbReference>
<dbReference type="FunCoup" id="Q9SVG9">
    <property type="interactions" value="225"/>
</dbReference>
<dbReference type="IntAct" id="Q9SVG9">
    <property type="interactions" value="1"/>
</dbReference>
<dbReference type="STRING" id="3702.Q9SVG9"/>
<dbReference type="iPTMnet" id="Q9SVG9"/>
<dbReference type="PaxDb" id="3702-AT4G20780.1"/>
<dbReference type="ProteomicsDB" id="241080"/>
<dbReference type="DNASU" id="827826"/>
<dbReference type="EnsemblPlants" id="AT4G20780.1">
    <property type="protein sequence ID" value="AT4G20780.1"/>
    <property type="gene ID" value="AT4G20780"/>
</dbReference>
<dbReference type="GeneID" id="827826"/>
<dbReference type="Gramene" id="AT4G20780.1">
    <property type="protein sequence ID" value="AT4G20780.1"/>
    <property type="gene ID" value="AT4G20780"/>
</dbReference>
<dbReference type="KEGG" id="ath:AT4G20780"/>
<dbReference type="Araport" id="AT4G20780"/>
<dbReference type="TAIR" id="AT4G20780">
    <property type="gene designation" value="CML42"/>
</dbReference>
<dbReference type="eggNOG" id="KOG0027">
    <property type="taxonomic scope" value="Eukaryota"/>
</dbReference>
<dbReference type="HOGENOM" id="CLU_061288_20_3_1"/>
<dbReference type="InParanoid" id="Q9SVG9"/>
<dbReference type="OMA" id="HIRCCED"/>
<dbReference type="OrthoDB" id="26525at2759"/>
<dbReference type="PhylomeDB" id="Q9SVG9"/>
<dbReference type="PRO" id="PR:Q9SVG9"/>
<dbReference type="Proteomes" id="UP000006548">
    <property type="component" value="Chromosome 4"/>
</dbReference>
<dbReference type="ExpressionAtlas" id="Q9SVG9">
    <property type="expression patterns" value="baseline and differential"/>
</dbReference>
<dbReference type="GO" id="GO:0005509">
    <property type="term" value="F:calcium ion binding"/>
    <property type="evidence" value="ECO:0000314"/>
    <property type="project" value="TAIR"/>
</dbReference>
<dbReference type="GO" id="GO:0010091">
    <property type="term" value="P:trichome branching"/>
    <property type="evidence" value="ECO:0000315"/>
    <property type="project" value="TAIR"/>
</dbReference>
<dbReference type="CDD" id="cd00051">
    <property type="entry name" value="EFh"/>
    <property type="match status" value="1"/>
</dbReference>
<dbReference type="FunFam" id="1.10.238.10:FF:000214">
    <property type="entry name" value="Calcium-binding protein CML42"/>
    <property type="match status" value="1"/>
</dbReference>
<dbReference type="FunFam" id="1.10.238.10:FF:000293">
    <property type="entry name" value="Calcium-binding protein CML42"/>
    <property type="match status" value="1"/>
</dbReference>
<dbReference type="Gene3D" id="1.10.238.10">
    <property type="entry name" value="EF-hand"/>
    <property type="match status" value="2"/>
</dbReference>
<dbReference type="InterPro" id="IPR011992">
    <property type="entry name" value="EF-hand-dom_pair"/>
</dbReference>
<dbReference type="InterPro" id="IPR018247">
    <property type="entry name" value="EF_Hand_1_Ca_BS"/>
</dbReference>
<dbReference type="InterPro" id="IPR002048">
    <property type="entry name" value="EF_hand_dom"/>
</dbReference>
<dbReference type="InterPro" id="IPR039647">
    <property type="entry name" value="EF_hand_pair_protein_CML-like"/>
</dbReference>
<dbReference type="PANTHER" id="PTHR10891">
    <property type="entry name" value="EF-HAND CALCIUM-BINDING DOMAIN CONTAINING PROTEIN"/>
    <property type="match status" value="1"/>
</dbReference>
<dbReference type="Pfam" id="PF13405">
    <property type="entry name" value="EF-hand_6"/>
    <property type="match status" value="1"/>
</dbReference>
<dbReference type="Pfam" id="PF13499">
    <property type="entry name" value="EF-hand_7"/>
    <property type="match status" value="1"/>
</dbReference>
<dbReference type="SMART" id="SM00054">
    <property type="entry name" value="EFh"/>
    <property type="match status" value="3"/>
</dbReference>
<dbReference type="SUPFAM" id="SSF47473">
    <property type="entry name" value="EF-hand"/>
    <property type="match status" value="1"/>
</dbReference>
<dbReference type="PROSITE" id="PS00018">
    <property type="entry name" value="EF_HAND_1"/>
    <property type="match status" value="3"/>
</dbReference>
<dbReference type="PROSITE" id="PS50222">
    <property type="entry name" value="EF_HAND_2"/>
    <property type="match status" value="3"/>
</dbReference>
<protein>
    <recommendedName>
        <fullName>Calcium-binding protein CML42</fullName>
    </recommendedName>
    <alternativeName>
        <fullName>Calmodulin-like protein 42</fullName>
    </alternativeName>
</protein>
<sequence length="191" mass="21147">MESNNNEKKKVARQSSSFRLRSPSLNALRLQRIFDLFDKNGDGFITVEELSQALTRLGLNADLSDLKSTVESYIQPGNTGLNFDDFSSLHKTLDDSFFGGACGGGENEDDPSSAAENESDLAEAFKVFDENGDGFISARELQTVLKKLGLPEGGEMERVEKMIVSVDRNQDGRVDFFEFKNMMRTVVIPSS</sequence>
<proteinExistence type="evidence at protein level"/>
<feature type="chain" id="PRO_0000342965" description="Calcium-binding protein CML42">
    <location>
        <begin position="1"/>
        <end position="191"/>
    </location>
</feature>
<feature type="domain" description="EF-hand 1" evidence="1">
    <location>
        <begin position="25"/>
        <end position="60"/>
    </location>
</feature>
<feature type="domain" description="EF-hand 2" evidence="1">
    <location>
        <begin position="116"/>
        <end position="151"/>
    </location>
</feature>
<feature type="domain" description="EF-hand 3" evidence="1">
    <location>
        <begin position="154"/>
        <end position="189"/>
    </location>
</feature>
<feature type="binding site" evidence="1">
    <location>
        <position position="38"/>
    </location>
    <ligand>
        <name>Ca(2+)</name>
        <dbReference type="ChEBI" id="CHEBI:29108"/>
        <label>1</label>
    </ligand>
</feature>
<feature type="binding site" evidence="1">
    <location>
        <position position="40"/>
    </location>
    <ligand>
        <name>Ca(2+)</name>
        <dbReference type="ChEBI" id="CHEBI:29108"/>
        <label>1</label>
    </ligand>
</feature>
<feature type="binding site" evidence="1">
    <location>
        <position position="42"/>
    </location>
    <ligand>
        <name>Ca(2+)</name>
        <dbReference type="ChEBI" id="CHEBI:29108"/>
        <label>1</label>
    </ligand>
</feature>
<feature type="binding site" evidence="1">
    <location>
        <position position="49"/>
    </location>
    <ligand>
        <name>Ca(2+)</name>
        <dbReference type="ChEBI" id="CHEBI:29108"/>
        <label>1</label>
    </ligand>
</feature>
<feature type="binding site" evidence="1">
    <location>
        <position position="129"/>
    </location>
    <ligand>
        <name>Ca(2+)</name>
        <dbReference type="ChEBI" id="CHEBI:29108"/>
        <label>2</label>
    </ligand>
</feature>
<feature type="binding site" evidence="1">
    <location>
        <position position="131"/>
    </location>
    <ligand>
        <name>Ca(2+)</name>
        <dbReference type="ChEBI" id="CHEBI:29108"/>
        <label>2</label>
    </ligand>
</feature>
<feature type="binding site" evidence="1">
    <location>
        <position position="133"/>
    </location>
    <ligand>
        <name>Ca(2+)</name>
        <dbReference type="ChEBI" id="CHEBI:29108"/>
        <label>2</label>
    </ligand>
</feature>
<feature type="binding site" evidence="1">
    <location>
        <position position="140"/>
    </location>
    <ligand>
        <name>Ca(2+)</name>
        <dbReference type="ChEBI" id="CHEBI:29108"/>
        <label>2</label>
    </ligand>
</feature>
<feature type="binding site" evidence="1">
    <location>
        <position position="167"/>
    </location>
    <ligand>
        <name>Ca(2+)</name>
        <dbReference type="ChEBI" id="CHEBI:29108"/>
        <label>3</label>
    </ligand>
</feature>
<feature type="binding site" evidence="1">
    <location>
        <position position="169"/>
    </location>
    <ligand>
        <name>Ca(2+)</name>
        <dbReference type="ChEBI" id="CHEBI:29108"/>
        <label>3</label>
    </ligand>
</feature>
<feature type="binding site" evidence="1">
    <location>
        <position position="171"/>
    </location>
    <ligand>
        <name>Ca(2+)</name>
        <dbReference type="ChEBI" id="CHEBI:29108"/>
        <label>3</label>
    </ligand>
</feature>
<feature type="binding site" evidence="1">
    <location>
        <position position="173"/>
    </location>
    <ligand>
        <name>Ca(2+)</name>
        <dbReference type="ChEBI" id="CHEBI:29108"/>
        <label>3</label>
    </ligand>
</feature>
<feature type="binding site" evidence="1">
    <location>
        <position position="178"/>
    </location>
    <ligand>
        <name>Ca(2+)</name>
        <dbReference type="ChEBI" id="CHEBI:29108"/>
        <label>3</label>
    </ligand>
</feature>
<comment type="function">
    <text evidence="3 4">Probable calcium sensor that binds calcium in vitro. Involved in the regulation of trichome branching.</text>
</comment>
<comment type="subunit">
    <text evidence="4">Interacts with KIC.</text>
</comment>
<comment type="interaction">
    <interactant intactId="EBI-2434394">
        <id>Q9SVG9</id>
    </interactant>
    <interactant intactId="EBI-2353491">
        <id>Q9ZPX9</id>
        <label>KIC</label>
    </interactant>
    <organismsDiffer>false</organismsDiffer>
    <experiments>4</experiments>
</comment>
<comment type="tissue specificity">
    <text evidence="3 4">Expressed in seedling shoots, roots, rosette leaves and flowers. Expressed in the leaf trichome support cells.</text>
</comment>
<comment type="induction">
    <text evidence="2">By touch.</text>
</comment>
<comment type="disruption phenotype">
    <text evidence="4">Trichomes with increased branch number.</text>
</comment>
<comment type="caution">
    <text evidence="5">Although assigned as a calmodulin family member by Ref.5, it only contains EF-hand domains.</text>
</comment>
<keyword id="KW-0106">Calcium</keyword>
<keyword id="KW-0479">Metal-binding</keyword>
<keyword id="KW-1185">Reference proteome</keyword>
<keyword id="KW-0677">Repeat</keyword>
<evidence type="ECO:0000255" key="1">
    <source>
        <dbReference type="PROSITE-ProRule" id="PRU00448"/>
    </source>
</evidence>
<evidence type="ECO:0000269" key="2">
    <source>
    </source>
</evidence>
<evidence type="ECO:0000269" key="3">
    <source>
    </source>
</evidence>
<evidence type="ECO:0000269" key="4">
    <source>
    </source>
</evidence>
<evidence type="ECO:0000305" key="5"/>